<gene>
    <name evidence="1" type="primary">srp19</name>
    <name type="ordered locus">Maeo_0004</name>
</gene>
<evidence type="ECO:0000255" key="1">
    <source>
        <dbReference type="HAMAP-Rule" id="MF_00305"/>
    </source>
</evidence>
<protein>
    <recommendedName>
        <fullName evidence="1">Signal recognition particle 19 kDa protein</fullName>
        <shortName evidence="1">SRP19</shortName>
    </recommendedName>
</protein>
<organism>
    <name type="scientific">Methanococcus aeolicus (strain ATCC BAA-1280 / DSM 17508 / OCM 812 / Nankai-3)</name>
    <dbReference type="NCBI Taxonomy" id="419665"/>
    <lineage>
        <taxon>Archaea</taxon>
        <taxon>Methanobacteriati</taxon>
        <taxon>Methanobacteriota</taxon>
        <taxon>Methanomada group</taxon>
        <taxon>Methanococci</taxon>
        <taxon>Methanococcales</taxon>
        <taxon>Methanococcaceae</taxon>
        <taxon>Methanococcus</taxon>
    </lineage>
</organism>
<keyword id="KW-0963">Cytoplasm</keyword>
<keyword id="KW-0687">Ribonucleoprotein</keyword>
<keyword id="KW-0694">RNA-binding</keyword>
<keyword id="KW-0733">Signal recognition particle</keyword>
<accession>A6USX5</accession>
<dbReference type="EMBL" id="CP000743">
    <property type="protein sequence ID" value="ABR55597.1"/>
    <property type="molecule type" value="Genomic_DNA"/>
</dbReference>
<dbReference type="RefSeq" id="WP_011972729.1">
    <property type="nucleotide sequence ID" value="NC_009635.1"/>
</dbReference>
<dbReference type="SMR" id="A6USX5"/>
<dbReference type="STRING" id="419665.Maeo_0004"/>
<dbReference type="GeneID" id="5327328"/>
<dbReference type="KEGG" id="mae:Maeo_0004"/>
<dbReference type="eggNOG" id="arCOG01217">
    <property type="taxonomic scope" value="Archaea"/>
</dbReference>
<dbReference type="HOGENOM" id="CLU_169299_1_0_2"/>
<dbReference type="OrthoDB" id="56356at2157"/>
<dbReference type="Proteomes" id="UP000001106">
    <property type="component" value="Chromosome"/>
</dbReference>
<dbReference type="GO" id="GO:0048500">
    <property type="term" value="C:signal recognition particle"/>
    <property type="evidence" value="ECO:0007669"/>
    <property type="project" value="UniProtKB-UniRule"/>
</dbReference>
<dbReference type="GO" id="GO:0008312">
    <property type="term" value="F:7S RNA binding"/>
    <property type="evidence" value="ECO:0007669"/>
    <property type="project" value="UniProtKB-UniRule"/>
</dbReference>
<dbReference type="GO" id="GO:0006617">
    <property type="term" value="P:SRP-dependent cotranslational protein targeting to membrane, signal sequence recognition"/>
    <property type="evidence" value="ECO:0007669"/>
    <property type="project" value="TreeGrafter"/>
</dbReference>
<dbReference type="Gene3D" id="3.30.56.30">
    <property type="entry name" value="Signal recognition particle, SRP19-like subunit"/>
    <property type="match status" value="1"/>
</dbReference>
<dbReference type="HAMAP" id="MF_00305">
    <property type="entry name" value="SRP19"/>
    <property type="match status" value="1"/>
</dbReference>
<dbReference type="InterPro" id="IPR002778">
    <property type="entry name" value="Signal_recog_particle_SRP19"/>
</dbReference>
<dbReference type="InterPro" id="IPR036521">
    <property type="entry name" value="SRP19-like_sf"/>
</dbReference>
<dbReference type="InterPro" id="IPR022938">
    <property type="entry name" value="SRP19_arc-type"/>
</dbReference>
<dbReference type="PANTHER" id="PTHR17453">
    <property type="entry name" value="SIGNAL RECOGNITION PARTICLE 19 KD PROTEIN"/>
    <property type="match status" value="1"/>
</dbReference>
<dbReference type="PANTHER" id="PTHR17453:SF0">
    <property type="entry name" value="SIGNAL RECOGNITION PARTICLE 19 KDA PROTEIN"/>
    <property type="match status" value="1"/>
</dbReference>
<dbReference type="Pfam" id="PF01922">
    <property type="entry name" value="SRP19"/>
    <property type="match status" value="1"/>
</dbReference>
<dbReference type="SUPFAM" id="SSF69695">
    <property type="entry name" value="SRP19"/>
    <property type="match status" value="1"/>
</dbReference>
<sequence>MKEIIIWSAYLDAEKSRKEGRKIPKELCVNNPKIKDIYNSLRKLGYNAEIVKNKCHPKEWWEIVGYIKVKVNDDIPKLEILKKICENLKK</sequence>
<proteinExistence type="inferred from homology"/>
<reference key="1">
    <citation type="submission" date="2007-06" db="EMBL/GenBank/DDBJ databases">
        <title>Complete sequence of Methanococcus aeolicus Nankai-3.</title>
        <authorList>
            <consortium name="US DOE Joint Genome Institute"/>
            <person name="Copeland A."/>
            <person name="Lucas S."/>
            <person name="Lapidus A."/>
            <person name="Barry K."/>
            <person name="Glavina del Rio T."/>
            <person name="Dalin E."/>
            <person name="Tice H."/>
            <person name="Pitluck S."/>
            <person name="Chain P."/>
            <person name="Malfatti S."/>
            <person name="Shin M."/>
            <person name="Vergez L."/>
            <person name="Schmutz J."/>
            <person name="Larimer F."/>
            <person name="Land M."/>
            <person name="Hauser L."/>
            <person name="Kyrpides N."/>
            <person name="Lykidis A."/>
            <person name="Sieprawska-Lupa M."/>
            <person name="Whitman W.B."/>
            <person name="Richardson P."/>
        </authorList>
    </citation>
    <scope>NUCLEOTIDE SEQUENCE [LARGE SCALE GENOMIC DNA]</scope>
    <source>
        <strain>ATCC BAA-1280 / DSM 17508 / OCM 812 / Nankai-3</strain>
    </source>
</reference>
<comment type="function">
    <text evidence="1">Involved in targeting and insertion of nascent membrane proteins into the cytoplasmic membrane. Binds directly to 7S RNA and mediates binding of the 54 kDa subunit of the SRP.</text>
</comment>
<comment type="subunit">
    <text evidence="1">Part of the signal recognition particle protein translocation system, which is composed of SRP and FtsY. Archaeal SRP consists of a 7S RNA molecule of 300 nucleotides and two protein subunits: SRP54 and SRP19.</text>
</comment>
<comment type="subcellular location">
    <subcellularLocation>
        <location evidence="1">Cytoplasm</location>
    </subcellularLocation>
</comment>
<comment type="similarity">
    <text evidence="1">Belongs to the SRP19 family.</text>
</comment>
<name>SRP19_META3</name>
<feature type="chain" id="PRO_0000322225" description="Signal recognition particle 19 kDa protein">
    <location>
        <begin position="1"/>
        <end position="90"/>
    </location>
</feature>